<comment type="function">
    <text evidence="3">Component of the RAVE complex which is required for stable assembly of the vacuolar ATPase complex V-ATPase.</text>
</comment>
<comment type="subunit">
    <text evidence="3">Component of the RAVE complex composed of rav1, rav2 and skp1. Interacts with vam2.</text>
</comment>
<comment type="subcellular location">
    <subcellularLocation>
        <location>Cytoplasm</location>
    </subcellularLocation>
    <subcellularLocation>
        <location>Nucleus</location>
    </subcellularLocation>
    <subcellularLocation>
        <location evidence="1">Endomembrane system</location>
    </subcellularLocation>
</comment>
<comment type="disruption phenotype">
    <text evidence="3">Leads to sensitivity to a range of drugs including doxorubicin, camptothecin, cycloheximide, and bleomycine, hydroxyurea, and fluconazole.</text>
</comment>
<sequence>MPLAFTNPGTPLKRTAAYDNVQWNQNRILTFGTRYTVLIIVNNYESYQNIQFGESIGAVALDQRTGFLAIAHGQVLDIYKPADSLKWTHHYNYITQLSEDITQLSWGYNFDLLLCASSYTKLINFSEDKPRLVWSQNRISDSFLSSTISSDACFIASIETKNPLAKVWQRTSPQGTVSSCDDFSYLVHPCRVRFSQWSKHLHPDASGSTPFLSTVGYDNVLRIWQVGSRFGSQLMHLSCFLNLRKYYKSDQPPYCCFIDKDDFTIALAHAISRHSGQVHKDRILNRLLALASGQPHIFLLFTFECLYIFSLVIDQETLSSFELINQVPTNFPKGALQPDGFIPIYRTSKHEFYDYNIILFFQNSAREYMFSLTDFFYSDFELRVSYDFYGHDYPIKSLTRTSNGHGIVSRDVNRICMFQSYISQDGKNQLICRFRLLLGESDFILPLYAGEYAAVLNLNSLKLWHCNEAIPPTLLCTCRQVPTSPIITFFILPVQNNDNSALCALTEGGHAWFWSVSNEAHDGSAVLRFIDRVNFTKNLNIASAVDVMGWSSTLNLSSLSSFDQEVFQSISKDGLLQTWMARVLGDDKAEISEISKVQTSIKSATMIKGSTSKKVAVVSENNRRLSIFDTRSSEFSEKEEFSSVFDDYGPINDLDWTSTPNSHSILAVGFLHDVILLCQNRRSYMNDIPCWSRIRRYNLLEYTNSLISDSSWLDNGTLVTAIGNGLFYFDNSLPEDQSLLFPASLKRSAKNIFDLAYQLNGILPVFHPQLLQQLLLRNQPFLFTNILLRFYLCLKDDVDMHFLLNMDCSEFYCCDEEISKDLLIKSLSQNSAEILNPAELDFEETSVSKHLGLYIDEMIKKLTALLKVKKVKTLTRSSQFLLLNLIEAFNKARALRDSLDLNGKRYCIMLNQYVLSKHQRQLTSLPTREMAWAFHSSNKAVLLDHTKKLHGKPLLWNAVEEYAIPFWLNEQLLKDVFLELSRNHYAEIDDRNPENVSLYHIALHKINVFRDLWRLASWHKESARTVKLLSNDFSKKKWKVVASKNAFALLSKHRYFYASAFFLLADSCYDAAKVCIRNLKSISLAIAMTRVYEGDDGPTLKRLINEYVLPLAVSQNDRWLTNWSFTILKQEKKALQSLVSPIRSLVSDNDFIQLYTSDKNDQEIHENKDSQRNSTNEPVRNKFPSDDPAFILLYECLRSSNVQIDESLEYRFVLHNANVYCQLGCDLIALGLLRNWKFQKNPATAHLETEDYMVTDKQSAVEKTHDSPKLGKTLMGQDIRPTPDDVPEFNESAFSFE</sequence>
<dbReference type="EMBL" id="CU329671">
    <property type="protein sequence ID" value="CAB50973.1"/>
    <property type="molecule type" value="Genomic_DNA"/>
</dbReference>
<dbReference type="PIR" id="T39287">
    <property type="entry name" value="T39287"/>
</dbReference>
<dbReference type="RefSeq" id="NP_596466.1">
    <property type="nucleotide sequence ID" value="NM_001022385.2"/>
</dbReference>
<dbReference type="SMR" id="Q9Y817"/>
<dbReference type="BioGRID" id="276258">
    <property type="interactions" value="27"/>
</dbReference>
<dbReference type="ComplexPortal" id="CPX-25781">
    <property type="entry name" value="RAVE complex"/>
</dbReference>
<dbReference type="FunCoup" id="Q9Y817">
    <property type="interactions" value="124"/>
</dbReference>
<dbReference type="STRING" id="284812.Q9Y817"/>
<dbReference type="iPTMnet" id="Q9Y817"/>
<dbReference type="PaxDb" id="4896-SPBC1105.10.1"/>
<dbReference type="EnsemblFungi" id="SPBC1105.10.1">
    <property type="protein sequence ID" value="SPBC1105.10.1:pep"/>
    <property type="gene ID" value="SPBC1105.10"/>
</dbReference>
<dbReference type="GeneID" id="2539705"/>
<dbReference type="KEGG" id="spo:2539705"/>
<dbReference type="PomBase" id="SPBC1105.10">
    <property type="gene designation" value="rav1"/>
</dbReference>
<dbReference type="VEuPathDB" id="FungiDB:SPBC1105.10"/>
<dbReference type="eggNOG" id="KOG1064">
    <property type="taxonomic scope" value="Eukaryota"/>
</dbReference>
<dbReference type="HOGENOM" id="CLU_000310_0_1_1"/>
<dbReference type="InParanoid" id="Q9Y817"/>
<dbReference type="OMA" id="NSHLTLW"/>
<dbReference type="PhylomeDB" id="Q9Y817"/>
<dbReference type="PRO" id="PR:Q9Y817"/>
<dbReference type="Proteomes" id="UP000002485">
    <property type="component" value="Chromosome II"/>
</dbReference>
<dbReference type="GO" id="GO:0005737">
    <property type="term" value="C:cytoplasm"/>
    <property type="evidence" value="ECO:0000314"/>
    <property type="project" value="PomBase"/>
</dbReference>
<dbReference type="GO" id="GO:0005829">
    <property type="term" value="C:cytosol"/>
    <property type="evidence" value="ECO:0007005"/>
    <property type="project" value="PomBase"/>
</dbReference>
<dbReference type="GO" id="GO:0010008">
    <property type="term" value="C:endosome membrane"/>
    <property type="evidence" value="ECO:0000314"/>
    <property type="project" value="PomBase"/>
</dbReference>
<dbReference type="GO" id="GO:0005634">
    <property type="term" value="C:nucleus"/>
    <property type="evidence" value="ECO:0007005"/>
    <property type="project" value="PomBase"/>
</dbReference>
<dbReference type="GO" id="GO:0043291">
    <property type="term" value="C:RAVE complex"/>
    <property type="evidence" value="ECO:0000353"/>
    <property type="project" value="PomBase"/>
</dbReference>
<dbReference type="GO" id="GO:0044877">
    <property type="term" value="F:protein-containing complex binding"/>
    <property type="evidence" value="ECO:0000353"/>
    <property type="project" value="PomBase"/>
</dbReference>
<dbReference type="GO" id="GO:0045324">
    <property type="term" value="P:late endosome to vacuole transport"/>
    <property type="evidence" value="ECO:0000304"/>
    <property type="project" value="PomBase"/>
</dbReference>
<dbReference type="GO" id="GO:0007035">
    <property type="term" value="P:vacuolar acidification"/>
    <property type="evidence" value="ECO:0000318"/>
    <property type="project" value="GO_Central"/>
</dbReference>
<dbReference type="GO" id="GO:0070072">
    <property type="term" value="P:vacuolar proton-transporting V-type ATPase complex assembly"/>
    <property type="evidence" value="ECO:0000304"/>
    <property type="project" value="PomBase"/>
</dbReference>
<dbReference type="InterPro" id="IPR052208">
    <property type="entry name" value="DmX-like/RAVE_component"/>
</dbReference>
<dbReference type="InterPro" id="IPR022033">
    <property type="entry name" value="Rav1p_C"/>
</dbReference>
<dbReference type="InterPro" id="IPR036322">
    <property type="entry name" value="WD40_repeat_dom_sf"/>
</dbReference>
<dbReference type="PANTHER" id="PTHR13950:SF9">
    <property type="entry name" value="RABCONNECTIN-3A"/>
    <property type="match status" value="1"/>
</dbReference>
<dbReference type="PANTHER" id="PTHR13950">
    <property type="entry name" value="RABCONNECTIN-RELATED"/>
    <property type="match status" value="1"/>
</dbReference>
<dbReference type="Pfam" id="PF12234">
    <property type="entry name" value="Rav1p_C"/>
    <property type="match status" value="1"/>
</dbReference>
<dbReference type="SUPFAM" id="SSF101908">
    <property type="entry name" value="Putative isomerase YbhE"/>
    <property type="match status" value="1"/>
</dbReference>
<dbReference type="SUPFAM" id="SSF50978">
    <property type="entry name" value="WD40 repeat-like"/>
    <property type="match status" value="1"/>
</dbReference>
<protein>
    <recommendedName>
        <fullName>Regulator of V-ATPase in vacuolar membrane protein 1</fullName>
    </recommendedName>
    <alternativeName>
        <fullName>RAVE complex subunit rav1</fullName>
    </alternativeName>
</protein>
<evidence type="ECO:0000250" key="1"/>
<evidence type="ECO:0000256" key="2">
    <source>
        <dbReference type="SAM" id="MobiDB-lite"/>
    </source>
</evidence>
<evidence type="ECO:0000269" key="3">
    <source>
    </source>
</evidence>
<proteinExistence type="evidence at protein level"/>
<accession>Q9Y817</accession>
<feature type="chain" id="PRO_0000310740" description="Regulator of V-ATPase in vacuolar membrane protein 1">
    <location>
        <begin position="1"/>
        <end position="1297"/>
    </location>
</feature>
<feature type="region of interest" description="Disordered" evidence="2">
    <location>
        <begin position="1161"/>
        <end position="1182"/>
    </location>
</feature>
<feature type="region of interest" description="Disordered" evidence="2">
    <location>
        <begin position="1260"/>
        <end position="1297"/>
    </location>
</feature>
<feature type="compositionally biased region" description="Basic and acidic residues" evidence="2">
    <location>
        <begin position="1161"/>
        <end position="1171"/>
    </location>
</feature>
<feature type="compositionally biased region" description="Basic and acidic residues" evidence="2">
    <location>
        <begin position="1260"/>
        <end position="1269"/>
    </location>
</feature>
<gene>
    <name type="primary">rav1</name>
    <name type="ORF">SPBC1105.10</name>
</gene>
<keyword id="KW-0963">Cytoplasm</keyword>
<keyword id="KW-0472">Membrane</keyword>
<keyword id="KW-0539">Nucleus</keyword>
<keyword id="KW-1185">Reference proteome</keyword>
<name>RAV1_SCHPO</name>
<reference key="1">
    <citation type="journal article" date="2002" name="Nature">
        <title>The genome sequence of Schizosaccharomyces pombe.</title>
        <authorList>
            <person name="Wood V."/>
            <person name="Gwilliam R."/>
            <person name="Rajandream M.A."/>
            <person name="Lyne M.H."/>
            <person name="Lyne R."/>
            <person name="Stewart A."/>
            <person name="Sgouros J.G."/>
            <person name="Peat N."/>
            <person name="Hayles J."/>
            <person name="Baker S.G."/>
            <person name="Basham D."/>
            <person name="Bowman S."/>
            <person name="Brooks K."/>
            <person name="Brown D."/>
            <person name="Brown S."/>
            <person name="Chillingworth T."/>
            <person name="Churcher C.M."/>
            <person name="Collins M."/>
            <person name="Connor R."/>
            <person name="Cronin A."/>
            <person name="Davis P."/>
            <person name="Feltwell T."/>
            <person name="Fraser A."/>
            <person name="Gentles S."/>
            <person name="Goble A."/>
            <person name="Hamlin N."/>
            <person name="Harris D.E."/>
            <person name="Hidalgo J."/>
            <person name="Hodgson G."/>
            <person name="Holroyd S."/>
            <person name="Hornsby T."/>
            <person name="Howarth S."/>
            <person name="Huckle E.J."/>
            <person name="Hunt S."/>
            <person name="Jagels K."/>
            <person name="James K.D."/>
            <person name="Jones L."/>
            <person name="Jones M."/>
            <person name="Leather S."/>
            <person name="McDonald S."/>
            <person name="McLean J."/>
            <person name="Mooney P."/>
            <person name="Moule S."/>
            <person name="Mungall K.L."/>
            <person name="Murphy L.D."/>
            <person name="Niblett D."/>
            <person name="Odell C."/>
            <person name="Oliver K."/>
            <person name="O'Neil S."/>
            <person name="Pearson D."/>
            <person name="Quail M.A."/>
            <person name="Rabbinowitsch E."/>
            <person name="Rutherford K.M."/>
            <person name="Rutter S."/>
            <person name="Saunders D."/>
            <person name="Seeger K."/>
            <person name="Sharp S."/>
            <person name="Skelton J."/>
            <person name="Simmonds M.N."/>
            <person name="Squares R."/>
            <person name="Squares S."/>
            <person name="Stevens K."/>
            <person name="Taylor K."/>
            <person name="Taylor R.G."/>
            <person name="Tivey A."/>
            <person name="Walsh S.V."/>
            <person name="Warren T."/>
            <person name="Whitehead S."/>
            <person name="Woodward J.R."/>
            <person name="Volckaert G."/>
            <person name="Aert R."/>
            <person name="Robben J."/>
            <person name="Grymonprez B."/>
            <person name="Weltjens I."/>
            <person name="Vanstreels E."/>
            <person name="Rieger M."/>
            <person name="Schaefer M."/>
            <person name="Mueller-Auer S."/>
            <person name="Gabel C."/>
            <person name="Fuchs M."/>
            <person name="Duesterhoeft A."/>
            <person name="Fritzc C."/>
            <person name="Holzer E."/>
            <person name="Moestl D."/>
            <person name="Hilbert H."/>
            <person name="Borzym K."/>
            <person name="Langer I."/>
            <person name="Beck A."/>
            <person name="Lehrach H."/>
            <person name="Reinhardt R."/>
            <person name="Pohl T.M."/>
            <person name="Eger P."/>
            <person name="Zimmermann W."/>
            <person name="Wedler H."/>
            <person name="Wambutt R."/>
            <person name="Purnelle B."/>
            <person name="Goffeau A."/>
            <person name="Cadieu E."/>
            <person name="Dreano S."/>
            <person name="Gloux S."/>
            <person name="Lelaure V."/>
            <person name="Mottier S."/>
            <person name="Galibert F."/>
            <person name="Aves S.J."/>
            <person name="Xiang Z."/>
            <person name="Hunt C."/>
            <person name="Moore K."/>
            <person name="Hurst S.M."/>
            <person name="Lucas M."/>
            <person name="Rochet M."/>
            <person name="Gaillardin C."/>
            <person name="Tallada V.A."/>
            <person name="Garzon A."/>
            <person name="Thode G."/>
            <person name="Daga R.R."/>
            <person name="Cruzado L."/>
            <person name="Jimenez J."/>
            <person name="Sanchez M."/>
            <person name="del Rey F."/>
            <person name="Benito J."/>
            <person name="Dominguez A."/>
            <person name="Revuelta J.L."/>
            <person name="Moreno S."/>
            <person name="Armstrong J."/>
            <person name="Forsburg S.L."/>
            <person name="Cerutti L."/>
            <person name="Lowe T."/>
            <person name="McCombie W.R."/>
            <person name="Paulsen I."/>
            <person name="Potashkin J."/>
            <person name="Shpakovski G.V."/>
            <person name="Ussery D."/>
            <person name="Barrell B.G."/>
            <person name="Nurse P."/>
        </authorList>
    </citation>
    <scope>NUCLEOTIDE SEQUENCE [LARGE SCALE GENOMIC DNA]</scope>
    <source>
        <strain>972 / ATCC 24843</strain>
    </source>
</reference>
<reference key="2">
    <citation type="journal article" date="2006" name="Nat. Biotechnol.">
        <title>ORFeome cloning and global analysis of protein localization in the fission yeast Schizosaccharomyces pombe.</title>
        <authorList>
            <person name="Matsuyama A."/>
            <person name="Arai R."/>
            <person name="Yashiroda Y."/>
            <person name="Shirai A."/>
            <person name="Kamata A."/>
            <person name="Sekido S."/>
            <person name="Kobayashi Y."/>
            <person name="Hashimoto A."/>
            <person name="Hamamoto M."/>
            <person name="Hiraoka Y."/>
            <person name="Horinouchi S."/>
            <person name="Yoshida M."/>
        </authorList>
    </citation>
    <scope>SUBCELLULAR LOCATION [LARGE SCALE ANALYSIS]</scope>
</reference>
<reference key="3">
    <citation type="journal article" date="2008" name="Eukaryot. Cell">
        <title>Loss of regulators of vacuolar ATPase function and ceramide synthesis results in multidrug sensitivity in Schizosaccharomyces pombe.</title>
        <authorList>
            <person name="Dawson K."/>
            <person name="Toone W.M."/>
            <person name="Jones N."/>
            <person name="Wilkinson C.R."/>
        </authorList>
    </citation>
    <scope>IDENTIFICATION IN THE RAVE COMPLEX</scope>
    <scope>INTERACTION WITH VAM2</scope>
    <scope>SUBCELLULAR LOCATION</scope>
    <scope>DISRUPTION PHENOTYPE</scope>
    <scope>FUNCTION</scope>
</reference>
<organism>
    <name type="scientific">Schizosaccharomyces pombe (strain 972 / ATCC 24843)</name>
    <name type="common">Fission yeast</name>
    <dbReference type="NCBI Taxonomy" id="284812"/>
    <lineage>
        <taxon>Eukaryota</taxon>
        <taxon>Fungi</taxon>
        <taxon>Dikarya</taxon>
        <taxon>Ascomycota</taxon>
        <taxon>Taphrinomycotina</taxon>
        <taxon>Schizosaccharomycetes</taxon>
        <taxon>Schizosaccharomycetales</taxon>
        <taxon>Schizosaccharomycetaceae</taxon>
        <taxon>Schizosaccharomyces</taxon>
    </lineage>
</organism>